<protein>
    <recommendedName>
        <fullName evidence="1">N-acetyl-gamma-glutamyl-phosphate reductase</fullName>
        <shortName evidence="1">AGPR</shortName>
        <ecNumber evidence="1">1.2.1.38</ecNumber>
    </recommendedName>
    <alternativeName>
        <fullName evidence="1">N-acetyl-glutamate semialdehyde dehydrogenase</fullName>
        <shortName evidence="1">NAGSA dehydrogenase</shortName>
    </alternativeName>
</protein>
<proteinExistence type="inferred from homology"/>
<reference key="1">
    <citation type="journal article" date="2003" name="Genome Res.">
        <title>Comparative genome analysis of Vibrio vulnificus, a marine pathogen.</title>
        <authorList>
            <person name="Chen C.-Y."/>
            <person name="Wu K.-M."/>
            <person name="Chang Y.-C."/>
            <person name="Chang C.-H."/>
            <person name="Tsai H.-C."/>
            <person name="Liao T.-L."/>
            <person name="Liu Y.-M."/>
            <person name="Chen H.-J."/>
            <person name="Shen A.B.-T."/>
            <person name="Li J.-C."/>
            <person name="Su T.-L."/>
            <person name="Shao C.-P."/>
            <person name="Lee C.-T."/>
            <person name="Hor L.-I."/>
            <person name="Tsai S.-F."/>
        </authorList>
    </citation>
    <scope>NUCLEOTIDE SEQUENCE [LARGE SCALE GENOMIC DNA]</scope>
    <source>
        <strain>YJ016</strain>
    </source>
</reference>
<comment type="function">
    <text evidence="1">Catalyzes the NADPH-dependent reduction of N-acetyl-5-glutamyl phosphate to yield N-acetyl-L-glutamate 5-semialdehyde.</text>
</comment>
<comment type="catalytic activity">
    <reaction evidence="1">
        <text>N-acetyl-L-glutamate 5-semialdehyde + phosphate + NADP(+) = N-acetyl-L-glutamyl 5-phosphate + NADPH + H(+)</text>
        <dbReference type="Rhea" id="RHEA:21588"/>
        <dbReference type="ChEBI" id="CHEBI:15378"/>
        <dbReference type="ChEBI" id="CHEBI:29123"/>
        <dbReference type="ChEBI" id="CHEBI:43474"/>
        <dbReference type="ChEBI" id="CHEBI:57783"/>
        <dbReference type="ChEBI" id="CHEBI:57936"/>
        <dbReference type="ChEBI" id="CHEBI:58349"/>
        <dbReference type="EC" id="1.2.1.38"/>
    </reaction>
</comment>
<comment type="pathway">
    <text evidence="1">Amino-acid biosynthesis; L-arginine biosynthesis; N(2)-acetyl-L-ornithine from L-glutamate: step 3/4.</text>
</comment>
<comment type="subcellular location">
    <subcellularLocation>
        <location evidence="1">Cytoplasm</location>
    </subcellularLocation>
</comment>
<comment type="similarity">
    <text evidence="1">Belongs to the NAGSA dehydrogenase family. Type 1 subfamily.</text>
</comment>
<feature type="chain" id="PRO_0000112474" description="N-acetyl-gamma-glutamyl-phosphate reductase">
    <location>
        <begin position="1"/>
        <end position="334"/>
    </location>
</feature>
<feature type="active site" evidence="1">
    <location>
        <position position="154"/>
    </location>
</feature>
<name>ARGC_VIBVY</name>
<gene>
    <name evidence="1" type="primary">argC</name>
    <name type="ordered locus">VV3002</name>
</gene>
<accession>Q7MH70</accession>
<dbReference type="EC" id="1.2.1.38" evidence="1"/>
<dbReference type="EMBL" id="BA000037">
    <property type="protein sequence ID" value="BAC95766.1"/>
    <property type="molecule type" value="Genomic_DNA"/>
</dbReference>
<dbReference type="RefSeq" id="WP_011151286.1">
    <property type="nucleotide sequence ID" value="NC_005139.1"/>
</dbReference>
<dbReference type="SMR" id="Q7MH70"/>
<dbReference type="STRING" id="672.VV93_v1c27300"/>
<dbReference type="KEGG" id="vvy:VV3002"/>
<dbReference type="PATRIC" id="fig|196600.6.peg.2979"/>
<dbReference type="eggNOG" id="COG0002">
    <property type="taxonomic scope" value="Bacteria"/>
</dbReference>
<dbReference type="HOGENOM" id="CLU_006384_0_1_6"/>
<dbReference type="UniPathway" id="UPA00068">
    <property type="reaction ID" value="UER00108"/>
</dbReference>
<dbReference type="Proteomes" id="UP000002675">
    <property type="component" value="Chromosome I"/>
</dbReference>
<dbReference type="GO" id="GO:0005737">
    <property type="term" value="C:cytoplasm"/>
    <property type="evidence" value="ECO:0007669"/>
    <property type="project" value="UniProtKB-SubCell"/>
</dbReference>
<dbReference type="GO" id="GO:0003942">
    <property type="term" value="F:N-acetyl-gamma-glutamyl-phosphate reductase activity"/>
    <property type="evidence" value="ECO:0007669"/>
    <property type="project" value="UniProtKB-UniRule"/>
</dbReference>
<dbReference type="GO" id="GO:0051287">
    <property type="term" value="F:NAD binding"/>
    <property type="evidence" value="ECO:0007669"/>
    <property type="project" value="InterPro"/>
</dbReference>
<dbReference type="GO" id="GO:0070401">
    <property type="term" value="F:NADP+ binding"/>
    <property type="evidence" value="ECO:0007669"/>
    <property type="project" value="InterPro"/>
</dbReference>
<dbReference type="GO" id="GO:0006526">
    <property type="term" value="P:L-arginine biosynthetic process"/>
    <property type="evidence" value="ECO:0007669"/>
    <property type="project" value="UniProtKB-UniRule"/>
</dbReference>
<dbReference type="CDD" id="cd23934">
    <property type="entry name" value="AGPR_1_C"/>
    <property type="match status" value="1"/>
</dbReference>
<dbReference type="CDD" id="cd17895">
    <property type="entry name" value="AGPR_1_N"/>
    <property type="match status" value="1"/>
</dbReference>
<dbReference type="FunFam" id="3.30.360.10:FF:000014">
    <property type="entry name" value="N-acetyl-gamma-glutamyl-phosphate reductase"/>
    <property type="match status" value="1"/>
</dbReference>
<dbReference type="Gene3D" id="3.30.360.10">
    <property type="entry name" value="Dihydrodipicolinate Reductase, domain 2"/>
    <property type="match status" value="1"/>
</dbReference>
<dbReference type="Gene3D" id="3.40.50.720">
    <property type="entry name" value="NAD(P)-binding Rossmann-like Domain"/>
    <property type="match status" value="1"/>
</dbReference>
<dbReference type="HAMAP" id="MF_00150">
    <property type="entry name" value="ArgC_type1"/>
    <property type="match status" value="1"/>
</dbReference>
<dbReference type="InterPro" id="IPR023013">
    <property type="entry name" value="AGPR_AS"/>
</dbReference>
<dbReference type="InterPro" id="IPR000706">
    <property type="entry name" value="AGPR_type-1"/>
</dbReference>
<dbReference type="InterPro" id="IPR036291">
    <property type="entry name" value="NAD(P)-bd_dom_sf"/>
</dbReference>
<dbReference type="InterPro" id="IPR050085">
    <property type="entry name" value="NAGSA_dehydrogenase"/>
</dbReference>
<dbReference type="InterPro" id="IPR000534">
    <property type="entry name" value="Semialdehyde_DH_NAD-bd"/>
</dbReference>
<dbReference type="NCBIfam" id="TIGR01850">
    <property type="entry name" value="argC"/>
    <property type="match status" value="1"/>
</dbReference>
<dbReference type="PANTHER" id="PTHR32338:SF10">
    <property type="entry name" value="N-ACETYL-GAMMA-GLUTAMYL-PHOSPHATE REDUCTASE, CHLOROPLASTIC-RELATED"/>
    <property type="match status" value="1"/>
</dbReference>
<dbReference type="PANTHER" id="PTHR32338">
    <property type="entry name" value="N-ACETYL-GAMMA-GLUTAMYL-PHOSPHATE REDUCTASE, CHLOROPLASTIC-RELATED-RELATED"/>
    <property type="match status" value="1"/>
</dbReference>
<dbReference type="Pfam" id="PF01118">
    <property type="entry name" value="Semialdhyde_dh"/>
    <property type="match status" value="1"/>
</dbReference>
<dbReference type="Pfam" id="PF22698">
    <property type="entry name" value="Semialdhyde_dhC_1"/>
    <property type="match status" value="1"/>
</dbReference>
<dbReference type="SMART" id="SM00859">
    <property type="entry name" value="Semialdhyde_dh"/>
    <property type="match status" value="1"/>
</dbReference>
<dbReference type="SUPFAM" id="SSF55347">
    <property type="entry name" value="Glyceraldehyde-3-phosphate dehydrogenase-like, C-terminal domain"/>
    <property type="match status" value="1"/>
</dbReference>
<dbReference type="SUPFAM" id="SSF51735">
    <property type="entry name" value="NAD(P)-binding Rossmann-fold domains"/>
    <property type="match status" value="1"/>
</dbReference>
<dbReference type="PROSITE" id="PS01224">
    <property type="entry name" value="ARGC"/>
    <property type="match status" value="1"/>
</dbReference>
<sequence>MLKTTIIGASGYTGAELALMVEKHPELTLAGLYVSANSSDAGKCISQLHGKLAGVIEMPVLPLTDPLGVAQDSDVIFLATAHEVSHDLAPLFLQQGCQVFDLSGAFRVKGDDFYTQFYGFAHQHSEWLDKAAYGLAEWNEEAIKASQLVAVAGCYTTAAQLAIKPLLVSQLVDTNQWPVINATSGVSGAGRKASMTNSFCEVSLQPYGIFNHRHQPEIVHHLGCDVIFTPHLGNFKRGILATITMKLQDGVTKEQVAHAFAQAYDRKPAVRLKGDVIPRIQDVEFTPFCDLGWKVQGQHIIVISAIDNLLKGASSQAMQCLNIHYGFSPLTALL</sequence>
<organism>
    <name type="scientific">Vibrio vulnificus (strain YJ016)</name>
    <dbReference type="NCBI Taxonomy" id="196600"/>
    <lineage>
        <taxon>Bacteria</taxon>
        <taxon>Pseudomonadati</taxon>
        <taxon>Pseudomonadota</taxon>
        <taxon>Gammaproteobacteria</taxon>
        <taxon>Vibrionales</taxon>
        <taxon>Vibrionaceae</taxon>
        <taxon>Vibrio</taxon>
    </lineage>
</organism>
<keyword id="KW-0028">Amino-acid biosynthesis</keyword>
<keyword id="KW-0055">Arginine biosynthesis</keyword>
<keyword id="KW-0963">Cytoplasm</keyword>
<keyword id="KW-0521">NADP</keyword>
<keyword id="KW-0560">Oxidoreductase</keyword>
<evidence type="ECO:0000255" key="1">
    <source>
        <dbReference type="HAMAP-Rule" id="MF_00150"/>
    </source>
</evidence>